<reference key="1">
    <citation type="submission" date="2005-08" db="EMBL/GenBank/DDBJ databases">
        <title>Complete sequence of chromosome 1 of Nitrosospira multiformis ATCC 25196.</title>
        <authorList>
            <person name="Copeland A."/>
            <person name="Lucas S."/>
            <person name="Lapidus A."/>
            <person name="Barry K."/>
            <person name="Detter J.C."/>
            <person name="Glavina T."/>
            <person name="Hammon N."/>
            <person name="Israni S."/>
            <person name="Pitluck S."/>
            <person name="Chain P."/>
            <person name="Malfatti S."/>
            <person name="Shin M."/>
            <person name="Vergez L."/>
            <person name="Schmutz J."/>
            <person name="Larimer F."/>
            <person name="Land M."/>
            <person name="Hauser L."/>
            <person name="Kyrpides N."/>
            <person name="Lykidis A."/>
            <person name="Richardson P."/>
        </authorList>
    </citation>
    <scope>NUCLEOTIDE SEQUENCE [LARGE SCALE GENOMIC DNA]</scope>
    <source>
        <strain>ATCC 25196 / NCIMB 11849 / C 71</strain>
    </source>
</reference>
<name>UBIE_NITMU</name>
<evidence type="ECO:0000255" key="1">
    <source>
        <dbReference type="HAMAP-Rule" id="MF_01813"/>
    </source>
</evidence>
<comment type="function">
    <text evidence="1">Methyltransferase required for the conversion of demethylmenaquinol (DMKH2) to menaquinol (MKH2) and the conversion of 2-polyprenyl-6-methoxy-1,4-benzoquinol (DDMQH2) to 2-polyprenyl-3-methyl-6-methoxy-1,4-benzoquinol (DMQH2).</text>
</comment>
<comment type="catalytic activity">
    <reaction evidence="1">
        <text>a 2-demethylmenaquinol + S-adenosyl-L-methionine = a menaquinol + S-adenosyl-L-homocysteine + H(+)</text>
        <dbReference type="Rhea" id="RHEA:42640"/>
        <dbReference type="Rhea" id="RHEA-COMP:9539"/>
        <dbReference type="Rhea" id="RHEA-COMP:9563"/>
        <dbReference type="ChEBI" id="CHEBI:15378"/>
        <dbReference type="ChEBI" id="CHEBI:18151"/>
        <dbReference type="ChEBI" id="CHEBI:55437"/>
        <dbReference type="ChEBI" id="CHEBI:57856"/>
        <dbReference type="ChEBI" id="CHEBI:59789"/>
        <dbReference type="EC" id="2.1.1.163"/>
    </reaction>
</comment>
<comment type="catalytic activity">
    <reaction evidence="1">
        <text>a 2-methoxy-6-(all-trans-polyprenyl)benzene-1,4-diol + S-adenosyl-L-methionine = a 5-methoxy-2-methyl-3-(all-trans-polyprenyl)benzene-1,4-diol + S-adenosyl-L-homocysteine + H(+)</text>
        <dbReference type="Rhea" id="RHEA:28286"/>
        <dbReference type="Rhea" id="RHEA-COMP:10858"/>
        <dbReference type="Rhea" id="RHEA-COMP:10859"/>
        <dbReference type="ChEBI" id="CHEBI:15378"/>
        <dbReference type="ChEBI" id="CHEBI:57856"/>
        <dbReference type="ChEBI" id="CHEBI:59789"/>
        <dbReference type="ChEBI" id="CHEBI:84166"/>
        <dbReference type="ChEBI" id="CHEBI:84167"/>
        <dbReference type="EC" id="2.1.1.201"/>
    </reaction>
</comment>
<comment type="pathway">
    <text evidence="1">Quinol/quinone metabolism; menaquinone biosynthesis; menaquinol from 1,4-dihydroxy-2-naphthoate: step 2/2.</text>
</comment>
<comment type="pathway">
    <text evidence="1">Cofactor biosynthesis; ubiquinone biosynthesis.</text>
</comment>
<comment type="similarity">
    <text evidence="1">Belongs to the class I-like SAM-binding methyltransferase superfamily. MenG/UbiE family.</text>
</comment>
<organism>
    <name type="scientific">Nitrosospira multiformis (strain ATCC 25196 / NCIMB 11849 / C 71)</name>
    <dbReference type="NCBI Taxonomy" id="323848"/>
    <lineage>
        <taxon>Bacteria</taxon>
        <taxon>Pseudomonadati</taxon>
        <taxon>Pseudomonadota</taxon>
        <taxon>Betaproteobacteria</taxon>
        <taxon>Nitrosomonadales</taxon>
        <taxon>Nitrosomonadaceae</taxon>
        <taxon>Nitrosospira</taxon>
    </lineage>
</organism>
<keyword id="KW-0474">Menaquinone biosynthesis</keyword>
<keyword id="KW-0489">Methyltransferase</keyword>
<keyword id="KW-1185">Reference proteome</keyword>
<keyword id="KW-0949">S-adenosyl-L-methionine</keyword>
<keyword id="KW-0808">Transferase</keyword>
<keyword id="KW-0831">Ubiquinone biosynthesis</keyword>
<accession>Q2Y6R0</accession>
<gene>
    <name evidence="1" type="primary">ubiE</name>
    <name type="ordered locus">Nmul_A2269</name>
</gene>
<sequence>MTRTTHFGFKTVSETEKAREVAGVFDSVAERYNLMNDLMSGGMHRLWKRFAIEVSGVRTGERVLDIAGGTADLSSLFLEQVGSRGEVWLTDINNSMLTIGRDRLLDEGTAVPVAQCDAEKLPFPTNYFDCVSVAFGLRNMTHKDVALKEMLRVLRPGGCVIVLEFSRIWKPLQRLYDLYSFKVLPAMGGLVAKDRDSYRYLAESIRVHPSQEELKQMMQKAGFERVQYFNLAANAVALHRGYKF</sequence>
<dbReference type="EC" id="2.1.1.163" evidence="1"/>
<dbReference type="EC" id="2.1.1.201" evidence="1"/>
<dbReference type="EMBL" id="CP000103">
    <property type="protein sequence ID" value="ABB75561.1"/>
    <property type="molecule type" value="Genomic_DNA"/>
</dbReference>
<dbReference type="RefSeq" id="WP_011381567.1">
    <property type="nucleotide sequence ID" value="NC_007614.1"/>
</dbReference>
<dbReference type="SMR" id="Q2Y6R0"/>
<dbReference type="STRING" id="323848.Nmul_A2269"/>
<dbReference type="KEGG" id="nmu:Nmul_A2269"/>
<dbReference type="eggNOG" id="COG2226">
    <property type="taxonomic scope" value="Bacteria"/>
</dbReference>
<dbReference type="HOGENOM" id="CLU_037990_0_0_4"/>
<dbReference type="OrthoDB" id="9808140at2"/>
<dbReference type="UniPathway" id="UPA00079">
    <property type="reaction ID" value="UER00169"/>
</dbReference>
<dbReference type="UniPathway" id="UPA00232"/>
<dbReference type="Proteomes" id="UP000002718">
    <property type="component" value="Chromosome"/>
</dbReference>
<dbReference type="GO" id="GO:0008425">
    <property type="term" value="F:2-methoxy-6-polyprenyl-1,4-benzoquinol methyltransferase activity"/>
    <property type="evidence" value="ECO:0007669"/>
    <property type="project" value="UniProtKB-UniRule"/>
</dbReference>
<dbReference type="GO" id="GO:0043770">
    <property type="term" value="F:demethylmenaquinone methyltransferase activity"/>
    <property type="evidence" value="ECO:0007669"/>
    <property type="project" value="UniProtKB-UniRule"/>
</dbReference>
<dbReference type="GO" id="GO:0009060">
    <property type="term" value="P:aerobic respiration"/>
    <property type="evidence" value="ECO:0007669"/>
    <property type="project" value="UniProtKB-UniRule"/>
</dbReference>
<dbReference type="GO" id="GO:0009234">
    <property type="term" value="P:menaquinone biosynthetic process"/>
    <property type="evidence" value="ECO:0007669"/>
    <property type="project" value="UniProtKB-UniRule"/>
</dbReference>
<dbReference type="GO" id="GO:0032259">
    <property type="term" value="P:methylation"/>
    <property type="evidence" value="ECO:0007669"/>
    <property type="project" value="UniProtKB-KW"/>
</dbReference>
<dbReference type="CDD" id="cd02440">
    <property type="entry name" value="AdoMet_MTases"/>
    <property type="match status" value="1"/>
</dbReference>
<dbReference type="Gene3D" id="3.40.50.150">
    <property type="entry name" value="Vaccinia Virus protein VP39"/>
    <property type="match status" value="1"/>
</dbReference>
<dbReference type="HAMAP" id="MF_01813">
    <property type="entry name" value="MenG_UbiE_methyltr"/>
    <property type="match status" value="1"/>
</dbReference>
<dbReference type="InterPro" id="IPR029063">
    <property type="entry name" value="SAM-dependent_MTases_sf"/>
</dbReference>
<dbReference type="InterPro" id="IPR004033">
    <property type="entry name" value="UbiE/COQ5_MeTrFase"/>
</dbReference>
<dbReference type="InterPro" id="IPR023576">
    <property type="entry name" value="UbiE/COQ5_MeTrFase_CS"/>
</dbReference>
<dbReference type="NCBIfam" id="TIGR01934">
    <property type="entry name" value="MenG_MenH_UbiE"/>
    <property type="match status" value="1"/>
</dbReference>
<dbReference type="NCBIfam" id="NF001240">
    <property type="entry name" value="PRK00216.1-1"/>
    <property type="match status" value="1"/>
</dbReference>
<dbReference type="PANTHER" id="PTHR43591:SF24">
    <property type="entry name" value="2-METHOXY-6-POLYPRENYL-1,4-BENZOQUINOL METHYLASE, MITOCHONDRIAL"/>
    <property type="match status" value="1"/>
</dbReference>
<dbReference type="PANTHER" id="PTHR43591">
    <property type="entry name" value="METHYLTRANSFERASE"/>
    <property type="match status" value="1"/>
</dbReference>
<dbReference type="Pfam" id="PF01209">
    <property type="entry name" value="Ubie_methyltran"/>
    <property type="match status" value="1"/>
</dbReference>
<dbReference type="SUPFAM" id="SSF53335">
    <property type="entry name" value="S-adenosyl-L-methionine-dependent methyltransferases"/>
    <property type="match status" value="1"/>
</dbReference>
<dbReference type="PROSITE" id="PS51608">
    <property type="entry name" value="SAM_MT_UBIE"/>
    <property type="match status" value="1"/>
</dbReference>
<dbReference type="PROSITE" id="PS01183">
    <property type="entry name" value="UBIE_1"/>
    <property type="match status" value="1"/>
</dbReference>
<dbReference type="PROSITE" id="PS01184">
    <property type="entry name" value="UBIE_2"/>
    <property type="match status" value="1"/>
</dbReference>
<protein>
    <recommendedName>
        <fullName evidence="1">Ubiquinone/menaquinone biosynthesis C-methyltransferase UbiE</fullName>
        <ecNumber evidence="1">2.1.1.163</ecNumber>
        <ecNumber evidence="1">2.1.1.201</ecNumber>
    </recommendedName>
    <alternativeName>
        <fullName evidence="1">2-methoxy-6-polyprenyl-1,4-benzoquinol methylase</fullName>
    </alternativeName>
    <alternativeName>
        <fullName evidence="1">Demethylmenaquinone methyltransferase</fullName>
    </alternativeName>
</protein>
<feature type="chain" id="PRO_1000056268" description="Ubiquinone/menaquinone biosynthesis C-methyltransferase UbiE">
    <location>
        <begin position="1"/>
        <end position="244"/>
    </location>
</feature>
<feature type="binding site" evidence="1">
    <location>
        <position position="70"/>
    </location>
    <ligand>
        <name>S-adenosyl-L-methionine</name>
        <dbReference type="ChEBI" id="CHEBI:59789"/>
    </ligand>
</feature>
<feature type="binding site" evidence="1">
    <location>
        <position position="91"/>
    </location>
    <ligand>
        <name>S-adenosyl-L-methionine</name>
        <dbReference type="ChEBI" id="CHEBI:59789"/>
    </ligand>
</feature>
<feature type="binding site" evidence="1">
    <location>
        <begin position="117"/>
        <end position="118"/>
    </location>
    <ligand>
        <name>S-adenosyl-L-methionine</name>
        <dbReference type="ChEBI" id="CHEBI:59789"/>
    </ligand>
</feature>
<proteinExistence type="inferred from homology"/>